<reference key="1">
    <citation type="journal article" date="2005" name="Proc. Natl. Acad. Sci. U.S.A.">
        <title>Complete genome sequence of Vibrio fischeri: a symbiotic bacterium with pathogenic congeners.</title>
        <authorList>
            <person name="Ruby E.G."/>
            <person name="Urbanowski M."/>
            <person name="Campbell J."/>
            <person name="Dunn A."/>
            <person name="Faini M."/>
            <person name="Gunsalus R."/>
            <person name="Lostroh P."/>
            <person name="Lupp C."/>
            <person name="McCann J."/>
            <person name="Millikan D."/>
            <person name="Schaefer A."/>
            <person name="Stabb E."/>
            <person name="Stevens A."/>
            <person name="Visick K."/>
            <person name="Whistler C."/>
            <person name="Greenberg E.P."/>
        </authorList>
    </citation>
    <scope>NUCLEOTIDE SEQUENCE [LARGE SCALE GENOMIC DNA]</scope>
    <source>
        <strain>ATCC 700601 / ES114</strain>
    </source>
</reference>
<sequence length="383" mass="41450">MKQAFNQRISSALNQRKQAGLNRSRRVVSQGNQATLVVDGKSYLNFSGNDYLGLASSKELMEAWQEGLSLYGSGSGASPLVTGYSKPHANLESQLAEWLGLDCAILFNSGFSANQAVLFSLLEKGDTLLQDKLNHASLMEAGMLSPAVMKRFKHNDVDHLKSLLKRSSDEPTLVVTEGVFSMDGDLSPLADIAKLTKENDAWLMVDDAHGCGVLGTNGKGCCDVYSITPDILIVTFGKGFGLSGAAVLCNQECGDYLSQFARHHVYSTAMPPAQAHALSHALLMIQQQEWRRDKLKELNQQFESELMNFLGAEKTPTPIKPIIIGEATDAMILADSLKERGLWTTAIRPPTVPVGSARIRVTLSANHSSADISALTQAINELG</sequence>
<comment type="function">
    <text evidence="1">Catalyzes the decarboxylative condensation of pimeloyl-[acyl-carrier protein] and L-alanine to produce 8-amino-7-oxononanoate (AON), [acyl-carrier protein], and carbon dioxide.</text>
</comment>
<comment type="catalytic activity">
    <reaction evidence="1">
        <text>6-carboxyhexanoyl-[ACP] + L-alanine + H(+) = (8S)-8-amino-7-oxononanoate + holo-[ACP] + CO2</text>
        <dbReference type="Rhea" id="RHEA:42288"/>
        <dbReference type="Rhea" id="RHEA-COMP:9685"/>
        <dbReference type="Rhea" id="RHEA-COMP:9955"/>
        <dbReference type="ChEBI" id="CHEBI:15378"/>
        <dbReference type="ChEBI" id="CHEBI:16526"/>
        <dbReference type="ChEBI" id="CHEBI:57972"/>
        <dbReference type="ChEBI" id="CHEBI:64479"/>
        <dbReference type="ChEBI" id="CHEBI:78846"/>
        <dbReference type="ChEBI" id="CHEBI:149468"/>
        <dbReference type="EC" id="2.3.1.47"/>
    </reaction>
</comment>
<comment type="cofactor">
    <cofactor evidence="1">
        <name>pyridoxal 5'-phosphate</name>
        <dbReference type="ChEBI" id="CHEBI:597326"/>
    </cofactor>
</comment>
<comment type="pathway">
    <text evidence="1">Cofactor biosynthesis; biotin biosynthesis.</text>
</comment>
<comment type="subunit">
    <text evidence="1">Homodimer.</text>
</comment>
<comment type="similarity">
    <text evidence="1">Belongs to the class-II pyridoxal-phosphate-dependent aminotransferase family. BioF subfamily.</text>
</comment>
<organism>
    <name type="scientific">Aliivibrio fischeri (strain ATCC 700601 / ES114)</name>
    <name type="common">Vibrio fischeri</name>
    <dbReference type="NCBI Taxonomy" id="312309"/>
    <lineage>
        <taxon>Bacteria</taxon>
        <taxon>Pseudomonadati</taxon>
        <taxon>Pseudomonadota</taxon>
        <taxon>Gammaproteobacteria</taxon>
        <taxon>Vibrionales</taxon>
        <taxon>Vibrionaceae</taxon>
        <taxon>Aliivibrio</taxon>
    </lineage>
</organism>
<proteinExistence type="inferred from homology"/>
<gene>
    <name evidence="1" type="primary">bioF</name>
    <name type="ordered locus">VF_A0747</name>
</gene>
<feature type="chain" id="PRO_0000381133" description="8-amino-7-oxononanoate synthase">
    <location>
        <begin position="1"/>
        <end position="383"/>
    </location>
</feature>
<feature type="binding site" evidence="1">
    <location>
        <position position="23"/>
    </location>
    <ligand>
        <name>substrate</name>
    </ligand>
</feature>
<feature type="binding site" evidence="1">
    <location>
        <begin position="110"/>
        <end position="111"/>
    </location>
    <ligand>
        <name>pyridoxal 5'-phosphate</name>
        <dbReference type="ChEBI" id="CHEBI:597326"/>
    </ligand>
</feature>
<feature type="binding site" evidence="1">
    <location>
        <position position="135"/>
    </location>
    <ligand>
        <name>substrate</name>
    </ligand>
</feature>
<feature type="binding site" evidence="1">
    <location>
        <position position="181"/>
    </location>
    <ligand>
        <name>pyridoxal 5'-phosphate</name>
        <dbReference type="ChEBI" id="CHEBI:597326"/>
    </ligand>
</feature>
<feature type="binding site" evidence="1">
    <location>
        <position position="209"/>
    </location>
    <ligand>
        <name>pyridoxal 5'-phosphate</name>
        <dbReference type="ChEBI" id="CHEBI:597326"/>
    </ligand>
</feature>
<feature type="binding site" evidence="1">
    <location>
        <position position="235"/>
    </location>
    <ligand>
        <name>pyridoxal 5'-phosphate</name>
        <dbReference type="ChEBI" id="CHEBI:597326"/>
    </ligand>
</feature>
<feature type="binding site" evidence="1">
    <location>
        <position position="351"/>
    </location>
    <ligand>
        <name>substrate</name>
    </ligand>
</feature>
<feature type="modified residue" description="N6-(pyridoxal phosphate)lysine" evidence="1">
    <location>
        <position position="238"/>
    </location>
</feature>
<accession>Q5DZH9</accession>
<evidence type="ECO:0000255" key="1">
    <source>
        <dbReference type="HAMAP-Rule" id="MF_01693"/>
    </source>
</evidence>
<dbReference type="EC" id="2.3.1.47" evidence="1"/>
<dbReference type="EMBL" id="CP000021">
    <property type="protein sequence ID" value="AAW87817.2"/>
    <property type="molecule type" value="Genomic_DNA"/>
</dbReference>
<dbReference type="RefSeq" id="WP_011263574.1">
    <property type="nucleotide sequence ID" value="NC_006841.2"/>
</dbReference>
<dbReference type="RefSeq" id="YP_206705.2">
    <property type="nucleotide sequence ID" value="NC_006841.2"/>
</dbReference>
<dbReference type="SMR" id="Q5DZH9"/>
<dbReference type="STRING" id="312309.VF_A0747"/>
<dbReference type="EnsemblBacteria" id="AAW87817">
    <property type="protein sequence ID" value="AAW87817"/>
    <property type="gene ID" value="VF_A0747"/>
</dbReference>
<dbReference type="GeneID" id="54166066"/>
<dbReference type="KEGG" id="vfi:VF_A0747"/>
<dbReference type="PATRIC" id="fig|312309.11.peg.3348"/>
<dbReference type="eggNOG" id="COG0156">
    <property type="taxonomic scope" value="Bacteria"/>
</dbReference>
<dbReference type="HOGENOM" id="CLU_015846_11_2_6"/>
<dbReference type="OrthoDB" id="9807157at2"/>
<dbReference type="UniPathway" id="UPA00078"/>
<dbReference type="Proteomes" id="UP000000537">
    <property type="component" value="Chromosome II"/>
</dbReference>
<dbReference type="GO" id="GO:0008710">
    <property type="term" value="F:8-amino-7-oxononanoate synthase activity"/>
    <property type="evidence" value="ECO:0007669"/>
    <property type="project" value="UniProtKB-UniRule"/>
</dbReference>
<dbReference type="GO" id="GO:0030170">
    <property type="term" value="F:pyridoxal phosphate binding"/>
    <property type="evidence" value="ECO:0007669"/>
    <property type="project" value="UniProtKB-UniRule"/>
</dbReference>
<dbReference type="GO" id="GO:0009102">
    <property type="term" value="P:biotin biosynthetic process"/>
    <property type="evidence" value="ECO:0007669"/>
    <property type="project" value="UniProtKB-UniRule"/>
</dbReference>
<dbReference type="Gene3D" id="3.90.1150.10">
    <property type="entry name" value="Aspartate Aminotransferase, domain 1"/>
    <property type="match status" value="1"/>
</dbReference>
<dbReference type="Gene3D" id="3.40.640.10">
    <property type="entry name" value="Type I PLP-dependent aspartate aminotransferase-like (Major domain)"/>
    <property type="match status" value="1"/>
</dbReference>
<dbReference type="HAMAP" id="MF_01693">
    <property type="entry name" value="BioF_aminotrans_2"/>
    <property type="match status" value="1"/>
</dbReference>
<dbReference type="InterPro" id="IPR001917">
    <property type="entry name" value="Aminotrans_II_pyridoxalP_BS"/>
</dbReference>
<dbReference type="InterPro" id="IPR004839">
    <property type="entry name" value="Aminotransferase_I/II_large"/>
</dbReference>
<dbReference type="InterPro" id="IPR050087">
    <property type="entry name" value="AON_synthase_class-II"/>
</dbReference>
<dbReference type="InterPro" id="IPR004723">
    <property type="entry name" value="AONS_Archaea/Proteobacteria"/>
</dbReference>
<dbReference type="InterPro" id="IPR022834">
    <property type="entry name" value="AONS_Proteobacteria"/>
</dbReference>
<dbReference type="InterPro" id="IPR015424">
    <property type="entry name" value="PyrdxlP-dep_Trfase"/>
</dbReference>
<dbReference type="InterPro" id="IPR015421">
    <property type="entry name" value="PyrdxlP-dep_Trfase_major"/>
</dbReference>
<dbReference type="InterPro" id="IPR015422">
    <property type="entry name" value="PyrdxlP-dep_Trfase_small"/>
</dbReference>
<dbReference type="NCBIfam" id="TIGR00858">
    <property type="entry name" value="bioF"/>
    <property type="match status" value="1"/>
</dbReference>
<dbReference type="PANTHER" id="PTHR13693:SF100">
    <property type="entry name" value="8-AMINO-7-OXONONANOATE SYNTHASE"/>
    <property type="match status" value="1"/>
</dbReference>
<dbReference type="PANTHER" id="PTHR13693">
    <property type="entry name" value="CLASS II AMINOTRANSFERASE/8-AMINO-7-OXONONANOATE SYNTHASE"/>
    <property type="match status" value="1"/>
</dbReference>
<dbReference type="Pfam" id="PF00155">
    <property type="entry name" value="Aminotran_1_2"/>
    <property type="match status" value="1"/>
</dbReference>
<dbReference type="SUPFAM" id="SSF53383">
    <property type="entry name" value="PLP-dependent transferases"/>
    <property type="match status" value="1"/>
</dbReference>
<dbReference type="PROSITE" id="PS00599">
    <property type="entry name" value="AA_TRANSFER_CLASS_2"/>
    <property type="match status" value="1"/>
</dbReference>
<name>BIOF_ALIF1</name>
<protein>
    <recommendedName>
        <fullName evidence="1">8-amino-7-oxononanoate synthase</fullName>
        <shortName evidence="1">AONS</shortName>
        <ecNumber evidence="1">2.3.1.47</ecNumber>
    </recommendedName>
    <alternativeName>
        <fullName evidence="1">7-keto-8-amino-pelargonic acid synthase</fullName>
        <shortName evidence="1">7-KAP synthase</shortName>
        <shortName evidence="1">KAPA synthase</shortName>
    </alternativeName>
    <alternativeName>
        <fullName evidence="1">8-amino-7-ketopelargonate synthase</fullName>
    </alternativeName>
</protein>
<keyword id="KW-0093">Biotin biosynthesis</keyword>
<keyword id="KW-0663">Pyridoxal phosphate</keyword>
<keyword id="KW-1185">Reference proteome</keyword>
<keyword id="KW-0808">Transferase</keyword>